<evidence type="ECO:0000255" key="1">
    <source>
        <dbReference type="HAMAP-Rule" id="MF_01588"/>
    </source>
</evidence>
<evidence type="ECO:0000256" key="2">
    <source>
        <dbReference type="SAM" id="MobiDB-lite"/>
    </source>
</evidence>
<gene>
    <name evidence="1" type="primary">ligA</name>
    <name type="ordered locus">Chy400_0256</name>
</gene>
<accession>B9LHI6</accession>
<dbReference type="EC" id="6.5.1.2" evidence="1"/>
<dbReference type="EMBL" id="CP001364">
    <property type="protein sequence ID" value="ACM51695.1"/>
    <property type="molecule type" value="Genomic_DNA"/>
</dbReference>
<dbReference type="SMR" id="B9LHI6"/>
<dbReference type="KEGG" id="chl:Chy400_0256"/>
<dbReference type="HOGENOM" id="CLU_007764_2_1_0"/>
<dbReference type="OrthoDB" id="9759736at2"/>
<dbReference type="GO" id="GO:0003677">
    <property type="term" value="F:DNA binding"/>
    <property type="evidence" value="ECO:0007669"/>
    <property type="project" value="InterPro"/>
</dbReference>
<dbReference type="GO" id="GO:0003911">
    <property type="term" value="F:DNA ligase (NAD+) activity"/>
    <property type="evidence" value="ECO:0007669"/>
    <property type="project" value="UniProtKB-UniRule"/>
</dbReference>
<dbReference type="GO" id="GO:0046872">
    <property type="term" value="F:metal ion binding"/>
    <property type="evidence" value="ECO:0007669"/>
    <property type="project" value="UniProtKB-KW"/>
</dbReference>
<dbReference type="GO" id="GO:0006281">
    <property type="term" value="P:DNA repair"/>
    <property type="evidence" value="ECO:0007669"/>
    <property type="project" value="UniProtKB-KW"/>
</dbReference>
<dbReference type="GO" id="GO:0006260">
    <property type="term" value="P:DNA replication"/>
    <property type="evidence" value="ECO:0007669"/>
    <property type="project" value="UniProtKB-KW"/>
</dbReference>
<dbReference type="CDD" id="cd00114">
    <property type="entry name" value="LIGANc"/>
    <property type="match status" value="1"/>
</dbReference>
<dbReference type="FunFam" id="1.10.150.20:FF:000006">
    <property type="entry name" value="DNA ligase"/>
    <property type="match status" value="1"/>
</dbReference>
<dbReference type="FunFam" id="1.10.150.20:FF:000007">
    <property type="entry name" value="DNA ligase"/>
    <property type="match status" value="1"/>
</dbReference>
<dbReference type="FunFam" id="1.10.287.610:FF:000002">
    <property type="entry name" value="DNA ligase"/>
    <property type="match status" value="1"/>
</dbReference>
<dbReference type="FunFam" id="2.40.50.140:FF:000012">
    <property type="entry name" value="DNA ligase"/>
    <property type="match status" value="1"/>
</dbReference>
<dbReference type="FunFam" id="3.30.470.30:FF:000001">
    <property type="entry name" value="DNA ligase"/>
    <property type="match status" value="1"/>
</dbReference>
<dbReference type="FunFam" id="6.20.10.30:FF:000007">
    <property type="entry name" value="DNA ligase"/>
    <property type="match status" value="1"/>
</dbReference>
<dbReference type="Gene3D" id="6.20.10.30">
    <property type="match status" value="1"/>
</dbReference>
<dbReference type="Gene3D" id="1.10.150.20">
    <property type="entry name" value="5' to 3' exonuclease, C-terminal subdomain"/>
    <property type="match status" value="2"/>
</dbReference>
<dbReference type="Gene3D" id="3.40.50.10190">
    <property type="entry name" value="BRCT domain"/>
    <property type="match status" value="1"/>
</dbReference>
<dbReference type="Gene3D" id="3.30.470.30">
    <property type="entry name" value="DNA ligase/mRNA capping enzyme"/>
    <property type="match status" value="1"/>
</dbReference>
<dbReference type="Gene3D" id="1.10.287.610">
    <property type="entry name" value="Helix hairpin bin"/>
    <property type="match status" value="1"/>
</dbReference>
<dbReference type="Gene3D" id="2.40.50.140">
    <property type="entry name" value="Nucleic acid-binding proteins"/>
    <property type="match status" value="1"/>
</dbReference>
<dbReference type="HAMAP" id="MF_01588">
    <property type="entry name" value="DNA_ligase_A"/>
    <property type="match status" value="1"/>
</dbReference>
<dbReference type="InterPro" id="IPR001357">
    <property type="entry name" value="BRCT_dom"/>
</dbReference>
<dbReference type="InterPro" id="IPR036420">
    <property type="entry name" value="BRCT_dom_sf"/>
</dbReference>
<dbReference type="InterPro" id="IPR041663">
    <property type="entry name" value="DisA/LigA_HHH"/>
</dbReference>
<dbReference type="InterPro" id="IPR001679">
    <property type="entry name" value="DNA_ligase"/>
</dbReference>
<dbReference type="InterPro" id="IPR018239">
    <property type="entry name" value="DNA_ligase_AS"/>
</dbReference>
<dbReference type="InterPro" id="IPR013839">
    <property type="entry name" value="DNAligase_adenylation"/>
</dbReference>
<dbReference type="InterPro" id="IPR013840">
    <property type="entry name" value="DNAligase_N"/>
</dbReference>
<dbReference type="InterPro" id="IPR003583">
    <property type="entry name" value="Hlx-hairpin-Hlx_DNA-bd_motif"/>
</dbReference>
<dbReference type="InterPro" id="IPR012340">
    <property type="entry name" value="NA-bd_OB-fold"/>
</dbReference>
<dbReference type="InterPro" id="IPR004150">
    <property type="entry name" value="NAD_DNA_ligase_OB"/>
</dbReference>
<dbReference type="InterPro" id="IPR010994">
    <property type="entry name" value="RuvA_2-like"/>
</dbReference>
<dbReference type="InterPro" id="IPR004149">
    <property type="entry name" value="Znf_DNAligase_C4"/>
</dbReference>
<dbReference type="NCBIfam" id="TIGR00575">
    <property type="entry name" value="dnlj"/>
    <property type="match status" value="1"/>
</dbReference>
<dbReference type="NCBIfam" id="NF005932">
    <property type="entry name" value="PRK07956.1"/>
    <property type="match status" value="1"/>
</dbReference>
<dbReference type="PANTHER" id="PTHR23389">
    <property type="entry name" value="CHROMOSOME TRANSMISSION FIDELITY FACTOR 18"/>
    <property type="match status" value="1"/>
</dbReference>
<dbReference type="PANTHER" id="PTHR23389:SF6">
    <property type="entry name" value="REPLICATION FACTOR C SUBUNIT 1"/>
    <property type="match status" value="1"/>
</dbReference>
<dbReference type="Pfam" id="PF00533">
    <property type="entry name" value="BRCT"/>
    <property type="match status" value="1"/>
</dbReference>
<dbReference type="Pfam" id="PF01653">
    <property type="entry name" value="DNA_ligase_aden"/>
    <property type="match status" value="1"/>
</dbReference>
<dbReference type="Pfam" id="PF03120">
    <property type="entry name" value="DNA_ligase_OB"/>
    <property type="match status" value="1"/>
</dbReference>
<dbReference type="Pfam" id="PF03119">
    <property type="entry name" value="DNA_ligase_ZBD"/>
    <property type="match status" value="1"/>
</dbReference>
<dbReference type="Pfam" id="PF12826">
    <property type="entry name" value="HHH_2"/>
    <property type="match status" value="1"/>
</dbReference>
<dbReference type="Pfam" id="PF14520">
    <property type="entry name" value="HHH_5"/>
    <property type="match status" value="1"/>
</dbReference>
<dbReference type="Pfam" id="PF22745">
    <property type="entry name" value="Nlig-Ia"/>
    <property type="match status" value="1"/>
</dbReference>
<dbReference type="PIRSF" id="PIRSF001604">
    <property type="entry name" value="LigA"/>
    <property type="match status" value="1"/>
</dbReference>
<dbReference type="SMART" id="SM00292">
    <property type="entry name" value="BRCT"/>
    <property type="match status" value="1"/>
</dbReference>
<dbReference type="SMART" id="SM00278">
    <property type="entry name" value="HhH1"/>
    <property type="match status" value="3"/>
</dbReference>
<dbReference type="SMART" id="SM00532">
    <property type="entry name" value="LIGANc"/>
    <property type="match status" value="1"/>
</dbReference>
<dbReference type="SUPFAM" id="SSF52113">
    <property type="entry name" value="BRCT domain"/>
    <property type="match status" value="1"/>
</dbReference>
<dbReference type="SUPFAM" id="SSF56091">
    <property type="entry name" value="DNA ligase/mRNA capping enzyme, catalytic domain"/>
    <property type="match status" value="1"/>
</dbReference>
<dbReference type="SUPFAM" id="SSF50249">
    <property type="entry name" value="Nucleic acid-binding proteins"/>
    <property type="match status" value="1"/>
</dbReference>
<dbReference type="SUPFAM" id="SSF47781">
    <property type="entry name" value="RuvA domain 2-like"/>
    <property type="match status" value="1"/>
</dbReference>
<dbReference type="PROSITE" id="PS50172">
    <property type="entry name" value="BRCT"/>
    <property type="match status" value="1"/>
</dbReference>
<dbReference type="PROSITE" id="PS01055">
    <property type="entry name" value="DNA_LIGASE_N1"/>
    <property type="match status" value="1"/>
</dbReference>
<sequence>MSHTTVADRINELRSLIRRYDYHYYVLDDPIVSDAEYDALMTELRALEAAHPELITPDSPTQRVSGTPASQFAKVQHPQPMLSLGNAFTKADLLAWRDRVLRLLGPDAIVAYVVEPKIDGLAVALTYRDGRLVQGATRGDGEVGEDVTANLRTIGSIPLTLQATSTPQDDDLPTTLPTTIEVRGEVYMRTADFETLNDRLAAAGEKIFANPRNAAAGSLRQKDPTITAARPLRFFAYGVGVVEGISLSSQWQTLRYLRALGFPVNQDVRRFTDFAEVLAYCEAWMAKRDDLPYEADGVVIKIDDFAQQRELGVVGRDPRWAIAFKFPAREAITRLLDITVNVGRTGVVTPNAELEPVQIGGVTVRNASLHNADYIAQRDIRIGDYVIVKRAGDVIPYVVGPVIARRDGSERPWQFPTHCPACGSPLEREEGEAAWRCNNFSICPAQLVRRVEHFVSRSALDIVGMGERQAELFVQRGLIRDVADIFFLKADQLAELEGFGPKRIANLLAAIDAARQRPLDRLLVGLGIRYVGTVAAQTLVAALGSLDAIMAARQEELEQIPGIGPVVAASIVDFFSRPANRALIEKLRAAGVQMGGVSGPTRQSDTLAGKTFVLTGTLPSLSREQASALIVAHGGKVTDSVSKKTSYVVAGANAGSKLAKALQLGIPVIDEAGLLALIGTTAEPPPSPPPPPPETNTDGNQLLLPLDGE</sequence>
<protein>
    <recommendedName>
        <fullName evidence="1">DNA ligase</fullName>
        <ecNumber evidence="1">6.5.1.2</ecNumber>
    </recommendedName>
    <alternativeName>
        <fullName evidence="1">Polydeoxyribonucleotide synthase [NAD(+)]</fullName>
    </alternativeName>
</protein>
<reference key="1">
    <citation type="submission" date="2009-01" db="EMBL/GenBank/DDBJ databases">
        <title>Complete sequence of Chloroflexus sp. Y-400-fl.</title>
        <authorList>
            <consortium name="US DOE Joint Genome Institute"/>
            <person name="Lucas S."/>
            <person name="Copeland A."/>
            <person name="Lapidus A."/>
            <person name="Glavina del Rio T."/>
            <person name="Dalin E."/>
            <person name="Tice H."/>
            <person name="Bruce D."/>
            <person name="Goodwin L."/>
            <person name="Pitluck S."/>
            <person name="Sims D."/>
            <person name="Kiss H."/>
            <person name="Brettin T."/>
            <person name="Detter J.C."/>
            <person name="Han C."/>
            <person name="Larimer F."/>
            <person name="Land M."/>
            <person name="Hauser L."/>
            <person name="Kyrpides N."/>
            <person name="Ovchinnikova G."/>
            <person name="Bryant D.A."/>
            <person name="Richardson P."/>
        </authorList>
    </citation>
    <scope>NUCLEOTIDE SEQUENCE [LARGE SCALE GENOMIC DNA]</scope>
    <source>
        <strain>ATCC 29364 / DSM 637 / Y-400-fl</strain>
    </source>
</reference>
<feature type="chain" id="PRO_0000380335" description="DNA ligase">
    <location>
        <begin position="1"/>
        <end position="709"/>
    </location>
</feature>
<feature type="domain" description="BRCT" evidence="1">
    <location>
        <begin position="602"/>
        <end position="691"/>
    </location>
</feature>
<feature type="region of interest" description="Disordered" evidence="2">
    <location>
        <begin position="679"/>
        <end position="709"/>
    </location>
</feature>
<feature type="compositionally biased region" description="Pro residues" evidence="2">
    <location>
        <begin position="683"/>
        <end position="694"/>
    </location>
</feature>
<feature type="active site" description="N6-AMP-lysine intermediate" evidence="1">
    <location>
        <position position="117"/>
    </location>
</feature>
<feature type="binding site" evidence="1">
    <location>
        <begin position="34"/>
        <end position="38"/>
    </location>
    <ligand>
        <name>NAD(+)</name>
        <dbReference type="ChEBI" id="CHEBI:57540"/>
    </ligand>
</feature>
<feature type="binding site" evidence="1">
    <location>
        <begin position="83"/>
        <end position="84"/>
    </location>
    <ligand>
        <name>NAD(+)</name>
        <dbReference type="ChEBI" id="CHEBI:57540"/>
    </ligand>
</feature>
<feature type="binding site" evidence="1">
    <location>
        <position position="115"/>
    </location>
    <ligand>
        <name>NAD(+)</name>
        <dbReference type="ChEBI" id="CHEBI:57540"/>
    </ligand>
</feature>
<feature type="binding site" evidence="1">
    <location>
        <position position="138"/>
    </location>
    <ligand>
        <name>NAD(+)</name>
        <dbReference type="ChEBI" id="CHEBI:57540"/>
    </ligand>
</feature>
<feature type="binding site" evidence="1">
    <location>
        <position position="185"/>
    </location>
    <ligand>
        <name>NAD(+)</name>
        <dbReference type="ChEBI" id="CHEBI:57540"/>
    </ligand>
</feature>
<feature type="binding site" evidence="1">
    <location>
        <position position="301"/>
    </location>
    <ligand>
        <name>NAD(+)</name>
        <dbReference type="ChEBI" id="CHEBI:57540"/>
    </ligand>
</feature>
<feature type="binding site" evidence="1">
    <location>
        <position position="325"/>
    </location>
    <ligand>
        <name>NAD(+)</name>
        <dbReference type="ChEBI" id="CHEBI:57540"/>
    </ligand>
</feature>
<feature type="binding site" evidence="1">
    <location>
        <position position="419"/>
    </location>
    <ligand>
        <name>Zn(2+)</name>
        <dbReference type="ChEBI" id="CHEBI:29105"/>
    </ligand>
</feature>
<feature type="binding site" evidence="1">
    <location>
        <position position="422"/>
    </location>
    <ligand>
        <name>Zn(2+)</name>
        <dbReference type="ChEBI" id="CHEBI:29105"/>
    </ligand>
</feature>
<feature type="binding site" evidence="1">
    <location>
        <position position="437"/>
    </location>
    <ligand>
        <name>Zn(2+)</name>
        <dbReference type="ChEBI" id="CHEBI:29105"/>
    </ligand>
</feature>
<feature type="binding site" evidence="1">
    <location>
        <position position="443"/>
    </location>
    <ligand>
        <name>Zn(2+)</name>
        <dbReference type="ChEBI" id="CHEBI:29105"/>
    </ligand>
</feature>
<proteinExistence type="inferred from homology"/>
<comment type="function">
    <text evidence="1">DNA ligase that catalyzes the formation of phosphodiester linkages between 5'-phosphoryl and 3'-hydroxyl groups in double-stranded DNA using NAD as a coenzyme and as the energy source for the reaction. It is essential for DNA replication and repair of damaged DNA.</text>
</comment>
<comment type="catalytic activity">
    <reaction evidence="1">
        <text>NAD(+) + (deoxyribonucleotide)n-3'-hydroxyl + 5'-phospho-(deoxyribonucleotide)m = (deoxyribonucleotide)n+m + AMP + beta-nicotinamide D-nucleotide.</text>
        <dbReference type="EC" id="6.5.1.2"/>
    </reaction>
</comment>
<comment type="cofactor">
    <cofactor evidence="1">
        <name>Mg(2+)</name>
        <dbReference type="ChEBI" id="CHEBI:18420"/>
    </cofactor>
    <cofactor evidence="1">
        <name>Mn(2+)</name>
        <dbReference type="ChEBI" id="CHEBI:29035"/>
    </cofactor>
</comment>
<comment type="similarity">
    <text evidence="1">Belongs to the NAD-dependent DNA ligase family. LigA subfamily.</text>
</comment>
<keyword id="KW-0227">DNA damage</keyword>
<keyword id="KW-0234">DNA repair</keyword>
<keyword id="KW-0235">DNA replication</keyword>
<keyword id="KW-0436">Ligase</keyword>
<keyword id="KW-0460">Magnesium</keyword>
<keyword id="KW-0464">Manganese</keyword>
<keyword id="KW-0479">Metal-binding</keyword>
<keyword id="KW-0520">NAD</keyword>
<keyword id="KW-0862">Zinc</keyword>
<name>DNLJ_CHLSY</name>
<organism>
    <name type="scientific">Chloroflexus aurantiacus (strain ATCC 29364 / DSM 637 / Y-400-fl)</name>
    <dbReference type="NCBI Taxonomy" id="480224"/>
    <lineage>
        <taxon>Bacteria</taxon>
        <taxon>Bacillati</taxon>
        <taxon>Chloroflexota</taxon>
        <taxon>Chloroflexia</taxon>
        <taxon>Chloroflexales</taxon>
        <taxon>Chloroflexineae</taxon>
        <taxon>Chloroflexaceae</taxon>
        <taxon>Chloroflexus</taxon>
    </lineage>
</organism>